<comment type="function">
    <text evidence="1 5">Part of a kinesin motor-adapter complex that is critical for the anterograde axonal transport of active zone components and contributes to activity-dependent presynaptic assembly during neuronal development.</text>
</comment>
<comment type="subunit">
    <text evidence="5">Interacts with STX1A and KIF5B.</text>
</comment>
<comment type="interaction">
    <interactant intactId="EBI-948293">
        <id>Q9NX95</id>
    </interactant>
    <interactant intactId="EBI-930964">
        <id>P54253</id>
        <label>ATXN1</label>
    </interactant>
    <organismsDiffer>false</organismsDiffer>
    <experiments>3</experiments>
</comment>
<comment type="interaction">
    <interactant intactId="EBI-948293">
        <id>Q9NX95</id>
    </interactant>
    <interactant intactId="EBI-465804">
        <id>Q96EV8</id>
        <label>DTNBP1</label>
    </interactant>
    <organismsDiffer>false</organismsDiffer>
    <experiments>3</experiments>
</comment>
<comment type="interaction">
    <interactant intactId="EBI-12816095">
        <id>Q9NX95-5</id>
    </interactant>
    <interactant intactId="EBI-351829">
        <id>O15145</id>
        <label>ARPC3</label>
    </interactant>
    <organismsDiffer>false</organismsDiffer>
    <experiments>3</experiments>
</comment>
<comment type="interaction">
    <interactant intactId="EBI-12816095">
        <id>Q9NX95-5</id>
    </interactant>
    <interactant intactId="EBI-930964">
        <id>P54253</id>
        <label>ATXN1</label>
    </interactant>
    <organismsDiffer>false</organismsDiffer>
    <experiments>6</experiments>
</comment>
<comment type="interaction">
    <interactant intactId="EBI-12816095">
        <id>Q9NX95-5</id>
    </interactant>
    <interactant intactId="EBI-10967515">
        <id>Q7Z460-2</id>
        <label>CLASP1</label>
    </interactant>
    <organismsDiffer>false</organismsDiffer>
    <experiments>3</experiments>
</comment>
<comment type="subcellular location">
    <molecule>Isoform 1</molecule>
    <subcellularLocation>
        <location>Cytoplasm</location>
        <location>Cytoskeleton</location>
    </subcellularLocation>
    <subcellularLocation>
        <location>Cytoplasmic vesicle</location>
    </subcellularLocation>
    <text>Colocalizes with syntaxin vesicles along microtubules in neuronal processes.</text>
</comment>
<comment type="subcellular location">
    <molecule>Isoform 3</molecule>
    <subcellularLocation>
        <location>Golgi apparatus membrane</location>
        <topology>Single-pass membrane protein</topology>
    </subcellularLocation>
</comment>
<comment type="subcellular location">
    <molecule>Isoform 4</molecule>
    <subcellularLocation>
        <location>Golgi apparatus membrane</location>
        <topology>Single-pass membrane protein</topology>
    </subcellularLocation>
</comment>
<comment type="subcellular location">
    <molecule>Isoform 5</molecule>
    <subcellularLocation>
        <location>Golgi apparatus membrane</location>
        <topology>Single-pass membrane protein</topology>
    </subcellularLocation>
</comment>
<comment type="alternative products">
    <event type="alternative splicing"/>
    <isoform>
        <id>Q9NX95-1</id>
        <name>1</name>
        <sequence type="displayed"/>
    </isoform>
    <isoform>
        <id>Q9NX95-2</id>
        <name>2</name>
        <sequence type="described" ref="VSP_019719 VSP_019722"/>
    </isoform>
    <isoform>
        <id>Q9NX95-3</id>
        <name>3</name>
        <name>GOLSYN A</name>
        <sequence type="described" ref="VSP_019721"/>
    </isoform>
    <isoform>
        <id>Q9NX95-4</id>
        <name>4</name>
        <name>GOLSYN C</name>
        <sequence type="described" ref="VSP_019720"/>
    </isoform>
    <isoform>
        <id>Q9NX95-5</id>
        <name>5</name>
        <name>GOLSYN B</name>
        <sequence type="described" ref="VSP_019718"/>
    </isoform>
</comment>
<comment type="tissue specificity">
    <text evidence="6">Isoform 3, isoform 4 and isoform 5 are expressed in HeLa cell line (at protein level). Isoform 3 is expressed in fetal and adult brain. Isoform 4 is expressed in numerous fetal tissues (brain, kidney, liver, lung, and thymus) and in adult brain, kidney, liver, lung, pancreas, colon, prostate, small intestine, testis and thymus. Isoform 5 is expressed in fetal brain, brain and small intestine.</text>
</comment>
<organism>
    <name type="scientific">Homo sapiens</name>
    <name type="common">Human</name>
    <dbReference type="NCBI Taxonomy" id="9606"/>
    <lineage>
        <taxon>Eukaryota</taxon>
        <taxon>Metazoa</taxon>
        <taxon>Chordata</taxon>
        <taxon>Craniata</taxon>
        <taxon>Vertebrata</taxon>
        <taxon>Euteleostomi</taxon>
        <taxon>Mammalia</taxon>
        <taxon>Eutheria</taxon>
        <taxon>Euarchontoglires</taxon>
        <taxon>Primates</taxon>
        <taxon>Haplorrhini</taxon>
        <taxon>Catarrhini</taxon>
        <taxon>Hominidae</taxon>
        <taxon>Homo</taxon>
    </lineage>
</organism>
<protein>
    <recommendedName>
        <fullName>Syntabulin</fullName>
    </recommendedName>
    <alternativeName>
        <fullName>Golgi-localized syntaphilin-related protein</fullName>
    </alternativeName>
    <alternativeName>
        <fullName>Syntaxin-1-binding protein</fullName>
    </alternativeName>
</protein>
<name>SYBU_HUMAN</name>
<feature type="chain" id="PRO_0000050798" description="Syntabulin">
    <location>
        <begin position="1"/>
        <end position="663"/>
    </location>
</feature>
<feature type="transmembrane region" description="Helical" evidence="3">
    <location>
        <begin position="606"/>
        <end position="626"/>
    </location>
</feature>
<feature type="region of interest" description="Disordered" evidence="4">
    <location>
        <begin position="1"/>
        <end position="202"/>
    </location>
</feature>
<feature type="region of interest" description="Sufficient for interaction with KIF5B" evidence="5">
    <location>
        <begin position="2"/>
        <end position="417"/>
    </location>
</feature>
<feature type="region of interest" description="Disordered" evidence="4">
    <location>
        <begin position="216"/>
        <end position="267"/>
    </location>
</feature>
<feature type="region of interest" description="Sufficient for interaction with STX1A" evidence="5">
    <location>
        <begin position="310"/>
        <end position="417"/>
    </location>
</feature>
<feature type="coiled-coil region" evidence="3">
    <location>
        <begin position="271"/>
        <end position="353"/>
    </location>
</feature>
<feature type="compositionally biased region" description="Low complexity" evidence="4">
    <location>
        <begin position="57"/>
        <end position="73"/>
    </location>
</feature>
<feature type="compositionally biased region" description="Polar residues" evidence="4">
    <location>
        <begin position="81"/>
        <end position="97"/>
    </location>
</feature>
<feature type="compositionally biased region" description="Low complexity" evidence="4">
    <location>
        <begin position="145"/>
        <end position="158"/>
    </location>
</feature>
<feature type="compositionally biased region" description="Low complexity" evidence="4">
    <location>
        <begin position="188"/>
        <end position="198"/>
    </location>
</feature>
<feature type="compositionally biased region" description="Low complexity" evidence="4">
    <location>
        <begin position="221"/>
        <end position="241"/>
    </location>
</feature>
<feature type="modified residue" description="Phosphoserine" evidence="11">
    <location>
        <position position="50"/>
    </location>
</feature>
<feature type="modified residue" description="Phosphoserine" evidence="2">
    <location>
        <position position="107"/>
    </location>
</feature>
<feature type="modified residue" description="Phosphoserine" evidence="12">
    <location>
        <position position="396"/>
    </location>
</feature>
<feature type="modified residue" description="Phosphoserine" evidence="2">
    <location>
        <position position="555"/>
    </location>
</feature>
<feature type="splice variant" id="VSP_019718" description="In isoform 5." evidence="7 8 9">
    <location>
        <begin position="1"/>
        <end position="119"/>
    </location>
</feature>
<feature type="splice variant" id="VSP_019719" description="In isoform 2." evidence="7">
    <location>
        <begin position="1"/>
        <end position="68"/>
    </location>
</feature>
<feature type="splice variant" id="VSP_019720" description="In isoform 4." evidence="9">
    <original>MGPLRESK</original>
    <variation>MSNFE</variation>
    <location>
        <begin position="1"/>
        <end position="8"/>
    </location>
</feature>
<feature type="splice variant" id="VSP_019721" description="In isoform 3." evidence="9">
    <location>
        <position position="8"/>
    </location>
</feature>
<feature type="splice variant" id="VSP_019722" description="In isoform 2." evidence="7">
    <original>VSSNSFCS</original>
    <variation>MGPFWARK</variation>
    <location>
        <begin position="69"/>
        <end position="76"/>
    </location>
</feature>
<feature type="sequence conflict" description="In Ref. 4; CAD28457." evidence="10" ref="4">
    <original>K</original>
    <variation>KMSNFE</variation>
    <location>
        <position position="8"/>
    </location>
</feature>
<feature type="sequence conflict" description="In Ref. 3; BAG53323." evidence="10" ref="3">
    <original>R</original>
    <variation>G</variation>
    <location>
        <position position="331"/>
    </location>
</feature>
<feature type="sequence conflict" description="In Ref. 3; BAA91121." evidence="10" ref="3">
    <original>D</original>
    <variation>G</variation>
    <location>
        <position position="440"/>
    </location>
</feature>
<dbReference type="EMBL" id="AY705385">
    <property type="protein sequence ID" value="AAU93914.1"/>
    <property type="molecule type" value="mRNA"/>
</dbReference>
<dbReference type="EMBL" id="AB195676">
    <property type="protein sequence ID" value="BAD72976.1"/>
    <property type="molecule type" value="mRNA"/>
</dbReference>
<dbReference type="EMBL" id="AB195677">
    <property type="protein sequence ID" value="BAD72977.1"/>
    <property type="molecule type" value="mRNA"/>
</dbReference>
<dbReference type="EMBL" id="AB195678">
    <property type="protein sequence ID" value="BAD72978.1"/>
    <property type="molecule type" value="mRNA"/>
</dbReference>
<dbReference type="EMBL" id="AB195679">
    <property type="protein sequence ID" value="BAD72979.1"/>
    <property type="molecule type" value="mRNA"/>
</dbReference>
<dbReference type="EMBL" id="AK000373">
    <property type="protein sequence ID" value="BAA91121.1"/>
    <property type="molecule type" value="mRNA"/>
</dbReference>
<dbReference type="EMBL" id="AK090559">
    <property type="protein sequence ID" value="BAG52185.1"/>
    <property type="molecule type" value="mRNA"/>
</dbReference>
<dbReference type="EMBL" id="AK096558">
    <property type="protein sequence ID" value="BAG53323.1"/>
    <property type="molecule type" value="mRNA"/>
</dbReference>
<dbReference type="EMBL" id="AK290469">
    <property type="protein sequence ID" value="BAF83158.1"/>
    <property type="molecule type" value="mRNA"/>
</dbReference>
<dbReference type="EMBL" id="AL713645">
    <property type="protein sequence ID" value="CAD28457.2"/>
    <property type="molecule type" value="mRNA"/>
</dbReference>
<dbReference type="EMBL" id="AL834406">
    <property type="protein sequence ID" value="CAD39068.1"/>
    <property type="molecule type" value="mRNA"/>
</dbReference>
<dbReference type="EMBL" id="CH471060">
    <property type="protein sequence ID" value="EAW91937.1"/>
    <property type="molecule type" value="Genomic_DNA"/>
</dbReference>
<dbReference type="EMBL" id="BC012082">
    <property type="protein sequence ID" value="AAH12082.2"/>
    <property type="molecule type" value="mRNA"/>
</dbReference>
<dbReference type="EMBL" id="AB040905">
    <property type="protein sequence ID" value="BAA95996.1"/>
    <property type="molecule type" value="mRNA"/>
</dbReference>
<dbReference type="CCDS" id="CCDS43763.1">
    <molecule id="Q9NX95-3"/>
</dbReference>
<dbReference type="CCDS" id="CCDS43764.1">
    <molecule id="Q9NX95-4"/>
</dbReference>
<dbReference type="CCDS" id="CCDS47912.1">
    <molecule id="Q9NX95-1"/>
</dbReference>
<dbReference type="CCDS" id="CCDS55271.1">
    <molecule id="Q9NX95-5"/>
</dbReference>
<dbReference type="RefSeq" id="NP_001093213.1">
    <molecule id="Q9NX95-3"/>
    <property type="nucleotide sequence ID" value="NM_001099743.2"/>
</dbReference>
<dbReference type="RefSeq" id="NP_001093214.1">
    <molecule id="Q9NX95-1"/>
    <property type="nucleotide sequence ID" value="NM_001099744.2"/>
</dbReference>
<dbReference type="RefSeq" id="NP_001093215.1">
    <molecule id="Q9NX95-1"/>
    <property type="nucleotide sequence ID" value="NM_001099745.2"/>
</dbReference>
<dbReference type="RefSeq" id="NP_001093216.1">
    <molecule id="Q9NX95-5"/>
    <property type="nucleotide sequence ID" value="NM_001099746.2"/>
</dbReference>
<dbReference type="RefSeq" id="NP_001093217.1">
    <molecule id="Q9NX95-3"/>
    <property type="nucleotide sequence ID" value="NM_001099747.2"/>
</dbReference>
<dbReference type="RefSeq" id="NP_001093218.1">
    <molecule id="Q9NX95-1"/>
    <property type="nucleotide sequence ID" value="NM_001099748.2"/>
</dbReference>
<dbReference type="RefSeq" id="NP_001093219.1">
    <molecule id="Q9NX95-5"/>
    <property type="nucleotide sequence ID" value="NM_001099749.2"/>
</dbReference>
<dbReference type="RefSeq" id="NP_001093220.1">
    <molecule id="Q9NX95-1"/>
    <property type="nucleotide sequence ID" value="NM_001099750.2"/>
</dbReference>
<dbReference type="RefSeq" id="NP_001093221.1">
    <molecule id="Q9NX95-3"/>
    <property type="nucleotide sequence ID" value="NM_001099751.2"/>
</dbReference>
<dbReference type="RefSeq" id="NP_001093222.1">
    <molecule id="Q9NX95-1"/>
    <property type="nucleotide sequence ID" value="NM_001099752.2"/>
</dbReference>
<dbReference type="RefSeq" id="NP_001093223.1">
    <molecule id="Q9NX95-3"/>
    <property type="nucleotide sequence ID" value="NM_001099753.2"/>
</dbReference>
<dbReference type="RefSeq" id="NP_001093224.1">
    <molecule id="Q9NX95-1"/>
    <property type="nucleotide sequence ID" value="NM_001099754.2"/>
</dbReference>
<dbReference type="RefSeq" id="NP_001093225.1">
    <molecule id="Q9NX95-5"/>
    <property type="nucleotide sequence ID" value="NM_001099755.2"/>
</dbReference>
<dbReference type="RefSeq" id="NP_001093226.1">
    <molecule id="Q9NX95-4"/>
    <property type="nucleotide sequence ID" value="NM_001099756.1"/>
</dbReference>
<dbReference type="RefSeq" id="NP_001317525.1">
    <property type="nucleotide sequence ID" value="NM_001330596.1"/>
</dbReference>
<dbReference type="RefSeq" id="NP_060256.3">
    <molecule id="Q9NX95-3"/>
    <property type="nucleotide sequence ID" value="NM_017786.6"/>
</dbReference>
<dbReference type="RefSeq" id="XP_016869103.1">
    <property type="nucleotide sequence ID" value="XM_017013614.1"/>
</dbReference>
<dbReference type="RefSeq" id="XP_016869104.1">
    <property type="nucleotide sequence ID" value="XM_017013615.1"/>
</dbReference>
<dbReference type="SMR" id="Q9NX95"/>
<dbReference type="BioGRID" id="120776">
    <property type="interactions" value="32"/>
</dbReference>
<dbReference type="FunCoup" id="Q9NX95">
    <property type="interactions" value="542"/>
</dbReference>
<dbReference type="IntAct" id="Q9NX95">
    <property type="interactions" value="28"/>
</dbReference>
<dbReference type="MINT" id="Q9NX95"/>
<dbReference type="STRING" id="9606.ENSP00000407118"/>
<dbReference type="GlyGen" id="Q9NX95">
    <property type="glycosylation" value="1 site, 1 O-linked glycan (1 site)"/>
</dbReference>
<dbReference type="iPTMnet" id="Q9NX95"/>
<dbReference type="PhosphoSitePlus" id="Q9NX95"/>
<dbReference type="BioMuta" id="SYBU"/>
<dbReference type="DMDM" id="110283010"/>
<dbReference type="jPOST" id="Q9NX95"/>
<dbReference type="MassIVE" id="Q9NX95"/>
<dbReference type="PaxDb" id="9606-ENSP00000407118"/>
<dbReference type="PeptideAtlas" id="Q9NX95"/>
<dbReference type="ProteomicsDB" id="83059">
    <molecule id="Q9NX95-1"/>
</dbReference>
<dbReference type="ProteomicsDB" id="83060">
    <molecule id="Q9NX95-2"/>
</dbReference>
<dbReference type="ProteomicsDB" id="83061">
    <molecule id="Q9NX95-3"/>
</dbReference>
<dbReference type="ProteomicsDB" id="83062">
    <molecule id="Q9NX95-4"/>
</dbReference>
<dbReference type="ProteomicsDB" id="83063">
    <molecule id="Q9NX95-5"/>
</dbReference>
<dbReference type="Antibodypedia" id="42935">
    <property type="antibodies" value="24 antibodies from 13 providers"/>
</dbReference>
<dbReference type="DNASU" id="55638"/>
<dbReference type="Ensembl" id="ENST00000276646.14">
    <molecule id="Q9NX95-1"/>
    <property type="protein sequence ID" value="ENSP00000276646.9"/>
    <property type="gene ID" value="ENSG00000147642.17"/>
</dbReference>
<dbReference type="Ensembl" id="ENST00000399066.7">
    <molecule id="Q9NX95-4"/>
    <property type="protein sequence ID" value="ENSP00000382019.3"/>
    <property type="gene ID" value="ENSG00000147642.17"/>
</dbReference>
<dbReference type="Ensembl" id="ENST00000408889.7">
    <molecule id="Q9NX95-5"/>
    <property type="protein sequence ID" value="ENSP00000386196.3"/>
    <property type="gene ID" value="ENSG00000147642.17"/>
</dbReference>
<dbReference type="Ensembl" id="ENST00000408908.6">
    <molecule id="Q9NX95-1"/>
    <property type="protein sequence ID" value="ENSP00000386154.2"/>
    <property type="gene ID" value="ENSG00000147642.17"/>
</dbReference>
<dbReference type="Ensembl" id="ENST00000422135.5">
    <molecule id="Q9NX95-1"/>
    <property type="protein sequence ID" value="ENSP00000407118.1"/>
    <property type="gene ID" value="ENSG00000147642.17"/>
</dbReference>
<dbReference type="Ensembl" id="ENST00000433638.1">
    <molecule id="Q9NX95-1"/>
    <property type="protein sequence ID" value="ENSP00000403544.1"/>
    <property type="gene ID" value="ENSG00000147642.17"/>
</dbReference>
<dbReference type="Ensembl" id="ENST00000440310.5">
    <molecule id="Q9NX95-1"/>
    <property type="protein sequence ID" value="ENSP00000404369.1"/>
    <property type="gene ID" value="ENSG00000147642.17"/>
</dbReference>
<dbReference type="Ensembl" id="ENST00000446070.6">
    <molecule id="Q9NX95-3"/>
    <property type="protein sequence ID" value="ENSP00000414748.2"/>
    <property type="gene ID" value="ENSG00000147642.17"/>
</dbReference>
<dbReference type="Ensembl" id="ENST00000528331.5">
    <molecule id="Q9NX95-5"/>
    <property type="protein sequence ID" value="ENSP00000436041.1"/>
    <property type="gene ID" value="ENSG00000147642.17"/>
</dbReference>
<dbReference type="Ensembl" id="ENST00000528647.5">
    <molecule id="Q9NX95-3"/>
    <property type="protein sequence ID" value="ENSP00000432501.1"/>
    <property type="gene ID" value="ENSG00000147642.17"/>
</dbReference>
<dbReference type="Ensembl" id="ENST00000532779.5">
    <molecule id="Q9NX95-2"/>
    <property type="protein sequence ID" value="ENSP00000436266.1"/>
    <property type="gene ID" value="ENSG00000147642.17"/>
</dbReference>
<dbReference type="Ensembl" id="ENST00000533065.5">
    <molecule id="Q9NX95-5"/>
    <property type="protein sequence ID" value="ENSP00000432962.1"/>
    <property type="gene ID" value="ENSG00000147642.17"/>
</dbReference>
<dbReference type="Ensembl" id="ENST00000533171.5">
    <molecule id="Q9NX95-1"/>
    <property type="protein sequence ID" value="ENSP00000434679.1"/>
    <property type="gene ID" value="ENSG00000147642.17"/>
</dbReference>
<dbReference type="Ensembl" id="ENST00000533895.5">
    <molecule id="Q9NX95-3"/>
    <property type="protein sequence ID" value="ENSP00000433446.1"/>
    <property type="gene ID" value="ENSG00000147642.17"/>
</dbReference>
<dbReference type="GeneID" id="55638"/>
<dbReference type="KEGG" id="hsa:55638"/>
<dbReference type="MANE-Select" id="ENST00000276646.14">
    <property type="protein sequence ID" value="ENSP00000276646.9"/>
    <property type="RefSeq nucleotide sequence ID" value="NM_001099754.2"/>
    <property type="RefSeq protein sequence ID" value="NP_001093224.1"/>
</dbReference>
<dbReference type="UCSC" id="uc003yni.5">
    <molecule id="Q9NX95-1"/>
    <property type="organism name" value="human"/>
</dbReference>
<dbReference type="AGR" id="HGNC:26011"/>
<dbReference type="CTD" id="55638"/>
<dbReference type="DisGeNET" id="55638"/>
<dbReference type="GeneCards" id="SYBU"/>
<dbReference type="HGNC" id="HGNC:26011">
    <property type="gene designation" value="SYBU"/>
</dbReference>
<dbReference type="HPA" id="ENSG00000147642">
    <property type="expression patterns" value="Tissue enhanced (brain, pancreas)"/>
</dbReference>
<dbReference type="MIM" id="611568">
    <property type="type" value="gene"/>
</dbReference>
<dbReference type="neXtProt" id="NX_Q9NX95"/>
<dbReference type="OpenTargets" id="ENSG00000147642"/>
<dbReference type="PharmGKB" id="PA165586000"/>
<dbReference type="VEuPathDB" id="HostDB:ENSG00000147642"/>
<dbReference type="eggNOG" id="ENOG502QQZ1">
    <property type="taxonomic scope" value="Eukaryota"/>
</dbReference>
<dbReference type="GeneTree" id="ENSGT00520000055634"/>
<dbReference type="HOGENOM" id="CLU_019458_0_0_1"/>
<dbReference type="InParanoid" id="Q9NX95"/>
<dbReference type="OMA" id="EHSKRTI"/>
<dbReference type="OrthoDB" id="5807119at2759"/>
<dbReference type="PAN-GO" id="Q9NX95">
    <property type="GO annotations" value="3 GO annotations based on evolutionary models"/>
</dbReference>
<dbReference type="PhylomeDB" id="Q9NX95"/>
<dbReference type="TreeFam" id="TF332407"/>
<dbReference type="PathwayCommons" id="Q9NX95"/>
<dbReference type="SignaLink" id="Q9NX95"/>
<dbReference type="SIGNOR" id="Q9NX95"/>
<dbReference type="BioGRID-ORCS" id="55638">
    <property type="hits" value="25 hits in 1159 CRISPR screens"/>
</dbReference>
<dbReference type="ChiTaRS" id="SYBU">
    <property type="organism name" value="human"/>
</dbReference>
<dbReference type="GeneWiki" id="GOLSYN"/>
<dbReference type="GenomeRNAi" id="55638"/>
<dbReference type="Pharos" id="Q9NX95">
    <property type="development level" value="Tbio"/>
</dbReference>
<dbReference type="PRO" id="PR:Q9NX95"/>
<dbReference type="Proteomes" id="UP000005640">
    <property type="component" value="Chromosome 8"/>
</dbReference>
<dbReference type="RNAct" id="Q9NX95">
    <property type="molecule type" value="protein"/>
</dbReference>
<dbReference type="Bgee" id="ENSG00000147642">
    <property type="expression patterns" value="Expressed in cerebellar vermis and 179 other cell types or tissues"/>
</dbReference>
<dbReference type="ExpressionAtlas" id="Q9NX95">
    <property type="expression patterns" value="baseline and differential"/>
</dbReference>
<dbReference type="GO" id="GO:1904115">
    <property type="term" value="C:axon cytoplasm"/>
    <property type="evidence" value="ECO:0007669"/>
    <property type="project" value="GOC"/>
</dbReference>
<dbReference type="GO" id="GO:0005881">
    <property type="term" value="C:cytoplasmic microtubule"/>
    <property type="evidence" value="ECO:0000318"/>
    <property type="project" value="GO_Central"/>
</dbReference>
<dbReference type="GO" id="GO:0031410">
    <property type="term" value="C:cytoplasmic vesicle"/>
    <property type="evidence" value="ECO:0007669"/>
    <property type="project" value="UniProtKB-KW"/>
</dbReference>
<dbReference type="GO" id="GO:0000139">
    <property type="term" value="C:Golgi membrane"/>
    <property type="evidence" value="ECO:0007669"/>
    <property type="project" value="UniProtKB-SubCell"/>
</dbReference>
<dbReference type="GO" id="GO:0043231">
    <property type="term" value="C:intracellular membrane-bounded organelle"/>
    <property type="evidence" value="ECO:0000314"/>
    <property type="project" value="HPA"/>
</dbReference>
<dbReference type="GO" id="GO:0005739">
    <property type="term" value="C:mitochondrion"/>
    <property type="evidence" value="ECO:0006056"/>
    <property type="project" value="FlyBase"/>
</dbReference>
<dbReference type="GO" id="GO:1990048">
    <property type="term" value="P:anterograde neuronal dense core vesicle transport"/>
    <property type="evidence" value="ECO:0007669"/>
    <property type="project" value="Ensembl"/>
</dbReference>
<dbReference type="GO" id="GO:0019896">
    <property type="term" value="P:axonal transport of mitochondrion"/>
    <property type="evidence" value="ECO:0000318"/>
    <property type="project" value="GO_Central"/>
</dbReference>
<dbReference type="GO" id="GO:0035774">
    <property type="term" value="P:positive regulation of insulin secretion involved in cellular response to glucose stimulus"/>
    <property type="evidence" value="ECO:0007669"/>
    <property type="project" value="Ensembl"/>
</dbReference>
<dbReference type="GO" id="GO:0060025">
    <property type="term" value="P:regulation of synaptic activity"/>
    <property type="evidence" value="ECO:0007669"/>
    <property type="project" value="Ensembl"/>
</dbReference>
<dbReference type="GO" id="GO:0060074">
    <property type="term" value="P:synapse maturation"/>
    <property type="evidence" value="ECO:0000318"/>
    <property type="project" value="GO_Central"/>
</dbReference>
<dbReference type="InterPro" id="IPR028197">
    <property type="entry name" value="Syntaphilin/Syntabulin"/>
</dbReference>
<dbReference type="PANTHER" id="PTHR16208">
    <property type="entry name" value="MICROTUBULE-ASSOCIATED PROTEIN/SYNTAPHILIN"/>
    <property type="match status" value="1"/>
</dbReference>
<dbReference type="PANTHER" id="PTHR16208:SF4">
    <property type="entry name" value="SYNTABULIN"/>
    <property type="match status" value="1"/>
</dbReference>
<dbReference type="Pfam" id="PF15290">
    <property type="entry name" value="Syntaphilin"/>
    <property type="match status" value="1"/>
</dbReference>
<proteinExistence type="evidence at protein level"/>
<sequence length="663" mass="72388">MGPLRESKKEHRVQHHDKEISRSRIPRLILRPHMPQQQHKVSPASESPFSEEESREFNPSSSGRSARTVSSNSFCSDDTGCPSSQSVSPVKTPSDAGNSPIGFCPGSDEGFTRKKCTIGMVGEGSIQSSRYKKESKSGLVKPGSEADFSSSSSTGSISAPEVHMSTAGSKRSSSSRNRGPHGRSNGASSHKPGSSPSSPREKDLLSMLCRNQLSPVNIHPSYAPSSPSSSNSGSYKGSDCSPIMRRSGRYMSCGENHGVRPPNPEQYLTPLQQKEVTVRHLKTKLKESERRLHERESEIVELKSQLARMREDWIEEECHRVEAQLALKEARKEIKQLKQVIETMRSSLADKDKGIQKYFVDINIQNKKLESLLQSMEMAHSGSLRDELCLDFPCDSPEKSLTLNPPLDTMADGLSLEEQVTGEGADRELLVGDSIANSTDLFDEIVTATTTESGDLELVHSTPGANVLELLPIVMGQEEGSVVVERAVQTDVVPYSPAISELIQSVLQKLQDPCPSSLASPDESEPDSMESFPESLSALVVDLTPRNPNSAILLSPVETPYANVDAEVHANRLMRELDFAACVEERLDGVIPLARGGVVRQYWSSSFLVDLLAVAAPVVPTVLWAFSTQRGGTDPVYNIGALLRGCCVVALHSLRRTAFRIKT</sequence>
<gene>
    <name type="primary">SYBU</name>
    <name type="synonym">GOLSYN</name>
    <name type="synonym">KIAA1472</name>
</gene>
<keyword id="KW-0025">Alternative splicing</keyword>
<keyword id="KW-0175">Coiled coil</keyword>
<keyword id="KW-0963">Cytoplasm</keyword>
<keyword id="KW-0968">Cytoplasmic vesicle</keyword>
<keyword id="KW-0206">Cytoskeleton</keyword>
<keyword id="KW-0333">Golgi apparatus</keyword>
<keyword id="KW-0472">Membrane</keyword>
<keyword id="KW-0597">Phosphoprotein</keyword>
<keyword id="KW-1267">Proteomics identification</keyword>
<keyword id="KW-1185">Reference proteome</keyword>
<keyword id="KW-0812">Transmembrane</keyword>
<keyword id="KW-1133">Transmembrane helix</keyword>
<evidence type="ECO:0000250" key="1"/>
<evidence type="ECO:0000250" key="2">
    <source>
        <dbReference type="UniProtKB" id="Q8BHS8"/>
    </source>
</evidence>
<evidence type="ECO:0000255" key="3"/>
<evidence type="ECO:0000256" key="4">
    <source>
        <dbReference type="SAM" id="MobiDB-lite"/>
    </source>
</evidence>
<evidence type="ECO:0000269" key="5">
    <source>
    </source>
</evidence>
<evidence type="ECO:0000269" key="6">
    <source>
    </source>
</evidence>
<evidence type="ECO:0000303" key="7">
    <source>
    </source>
</evidence>
<evidence type="ECO:0000303" key="8">
    <source>
    </source>
</evidence>
<evidence type="ECO:0000303" key="9">
    <source>
    </source>
</evidence>
<evidence type="ECO:0000305" key="10"/>
<evidence type="ECO:0007744" key="11">
    <source>
    </source>
</evidence>
<evidence type="ECO:0007744" key="12">
    <source>
    </source>
</evidence>
<reference key="1">
    <citation type="journal article" date="2004" name="Nat. Cell Biol.">
        <title>Syntabulin is a microtubule-associated protein implicated in syntaxin transport in neurons.</title>
        <authorList>
            <person name="Su Q."/>
            <person name="Cai Q."/>
            <person name="Gerwin C."/>
            <person name="Smith C.L."/>
            <person name="Sheng Z.-H."/>
        </authorList>
    </citation>
    <scope>NUCLEOTIDE SEQUENCE [MRNA] (ISOFORM 1)</scope>
    <scope>FUNCTION</scope>
    <scope>INTERACTION WITH KIF5B AND STX1A</scope>
    <scope>SUBCELLULAR LOCATION</scope>
    <source>
        <tissue>Brain</tissue>
    </source>
</reference>
<reference key="2">
    <citation type="journal article" date="2005" name="Gene">
        <title>Molecular cloning and characterization of gene for Golgi-localized syntaphilin-related protein on human chromosome 8q23.</title>
        <authorList>
            <person name="Funakoshi E."/>
            <person name="Nakagawa K.-Y."/>
            <person name="Hamano A."/>
            <person name="Hori T."/>
            <person name="Shimizu A."/>
            <person name="Asakawa S."/>
            <person name="Shimizu N."/>
            <person name="Ito F."/>
        </authorList>
    </citation>
    <scope>NUCLEOTIDE SEQUENCE [MRNA] (ISOFORMS 3; 4 AND 5)</scope>
    <scope>SUBCELLULAR LOCATION</scope>
    <scope>TISSUE SPECIFICITY</scope>
    <source>
        <tissue>Fetal brain</tissue>
    </source>
</reference>
<reference key="3">
    <citation type="journal article" date="2004" name="Nat. Genet.">
        <title>Complete sequencing and characterization of 21,243 full-length human cDNAs.</title>
        <authorList>
            <person name="Ota T."/>
            <person name="Suzuki Y."/>
            <person name="Nishikawa T."/>
            <person name="Otsuki T."/>
            <person name="Sugiyama T."/>
            <person name="Irie R."/>
            <person name="Wakamatsu A."/>
            <person name="Hayashi K."/>
            <person name="Sato H."/>
            <person name="Nagai K."/>
            <person name="Kimura K."/>
            <person name="Makita H."/>
            <person name="Sekine M."/>
            <person name="Obayashi M."/>
            <person name="Nishi T."/>
            <person name="Shibahara T."/>
            <person name="Tanaka T."/>
            <person name="Ishii S."/>
            <person name="Yamamoto J."/>
            <person name="Saito K."/>
            <person name="Kawai Y."/>
            <person name="Isono Y."/>
            <person name="Nakamura Y."/>
            <person name="Nagahari K."/>
            <person name="Murakami K."/>
            <person name="Yasuda T."/>
            <person name="Iwayanagi T."/>
            <person name="Wagatsuma M."/>
            <person name="Shiratori A."/>
            <person name="Sudo H."/>
            <person name="Hosoiri T."/>
            <person name="Kaku Y."/>
            <person name="Kodaira H."/>
            <person name="Kondo H."/>
            <person name="Sugawara M."/>
            <person name="Takahashi M."/>
            <person name="Kanda K."/>
            <person name="Yokoi T."/>
            <person name="Furuya T."/>
            <person name="Kikkawa E."/>
            <person name="Omura Y."/>
            <person name="Abe K."/>
            <person name="Kamihara K."/>
            <person name="Katsuta N."/>
            <person name="Sato K."/>
            <person name="Tanikawa M."/>
            <person name="Yamazaki M."/>
            <person name="Ninomiya K."/>
            <person name="Ishibashi T."/>
            <person name="Yamashita H."/>
            <person name="Murakawa K."/>
            <person name="Fujimori K."/>
            <person name="Tanai H."/>
            <person name="Kimata M."/>
            <person name="Watanabe M."/>
            <person name="Hiraoka S."/>
            <person name="Chiba Y."/>
            <person name="Ishida S."/>
            <person name="Ono Y."/>
            <person name="Takiguchi S."/>
            <person name="Watanabe S."/>
            <person name="Yosida M."/>
            <person name="Hotuta T."/>
            <person name="Kusano J."/>
            <person name="Kanehori K."/>
            <person name="Takahashi-Fujii A."/>
            <person name="Hara H."/>
            <person name="Tanase T.-O."/>
            <person name="Nomura Y."/>
            <person name="Togiya S."/>
            <person name="Komai F."/>
            <person name="Hara R."/>
            <person name="Takeuchi K."/>
            <person name="Arita M."/>
            <person name="Imose N."/>
            <person name="Musashino K."/>
            <person name="Yuuki H."/>
            <person name="Oshima A."/>
            <person name="Sasaki N."/>
            <person name="Aotsuka S."/>
            <person name="Yoshikawa Y."/>
            <person name="Matsunawa H."/>
            <person name="Ichihara T."/>
            <person name="Shiohata N."/>
            <person name="Sano S."/>
            <person name="Moriya S."/>
            <person name="Momiyama H."/>
            <person name="Satoh N."/>
            <person name="Takami S."/>
            <person name="Terashima Y."/>
            <person name="Suzuki O."/>
            <person name="Nakagawa S."/>
            <person name="Senoh A."/>
            <person name="Mizoguchi H."/>
            <person name="Goto Y."/>
            <person name="Shimizu F."/>
            <person name="Wakebe H."/>
            <person name="Hishigaki H."/>
            <person name="Watanabe T."/>
            <person name="Sugiyama A."/>
            <person name="Takemoto M."/>
            <person name="Kawakami B."/>
            <person name="Yamazaki M."/>
            <person name="Watanabe K."/>
            <person name="Kumagai A."/>
            <person name="Itakura S."/>
            <person name="Fukuzumi Y."/>
            <person name="Fujimori Y."/>
            <person name="Komiyama M."/>
            <person name="Tashiro H."/>
            <person name="Tanigami A."/>
            <person name="Fujiwara T."/>
            <person name="Ono T."/>
            <person name="Yamada K."/>
            <person name="Fujii Y."/>
            <person name="Ozaki K."/>
            <person name="Hirao M."/>
            <person name="Ohmori Y."/>
            <person name="Kawabata A."/>
            <person name="Hikiji T."/>
            <person name="Kobatake N."/>
            <person name="Inagaki H."/>
            <person name="Ikema Y."/>
            <person name="Okamoto S."/>
            <person name="Okitani R."/>
            <person name="Kawakami T."/>
            <person name="Noguchi S."/>
            <person name="Itoh T."/>
            <person name="Shigeta K."/>
            <person name="Senba T."/>
            <person name="Matsumura K."/>
            <person name="Nakajima Y."/>
            <person name="Mizuno T."/>
            <person name="Morinaga M."/>
            <person name="Sasaki M."/>
            <person name="Togashi T."/>
            <person name="Oyama M."/>
            <person name="Hata H."/>
            <person name="Watanabe M."/>
            <person name="Komatsu T."/>
            <person name="Mizushima-Sugano J."/>
            <person name="Satoh T."/>
            <person name="Shirai Y."/>
            <person name="Takahashi Y."/>
            <person name="Nakagawa K."/>
            <person name="Okumura K."/>
            <person name="Nagase T."/>
            <person name="Nomura N."/>
            <person name="Kikuchi H."/>
            <person name="Masuho Y."/>
            <person name="Yamashita R."/>
            <person name="Nakai K."/>
            <person name="Yada T."/>
            <person name="Nakamura Y."/>
            <person name="Ohara O."/>
            <person name="Isogai T."/>
            <person name="Sugano S."/>
        </authorList>
    </citation>
    <scope>NUCLEOTIDE SEQUENCE [LARGE SCALE MRNA] (ISOFORMS 1; 2 AND 5)</scope>
    <source>
        <tissue>Fetal brain</tissue>
        <tissue>Hepatoma</tissue>
    </source>
</reference>
<reference key="4">
    <citation type="journal article" date="2007" name="BMC Genomics">
        <title>The full-ORF clone resource of the German cDNA consortium.</title>
        <authorList>
            <person name="Bechtel S."/>
            <person name="Rosenfelder H."/>
            <person name="Duda A."/>
            <person name="Schmidt C.P."/>
            <person name="Ernst U."/>
            <person name="Wellenreuther R."/>
            <person name="Mehrle A."/>
            <person name="Schuster C."/>
            <person name="Bahr A."/>
            <person name="Bloecker H."/>
            <person name="Heubner D."/>
            <person name="Hoerlein A."/>
            <person name="Michel G."/>
            <person name="Wedler H."/>
            <person name="Koehrer K."/>
            <person name="Ottenwaelder B."/>
            <person name="Poustka A."/>
            <person name="Wiemann S."/>
            <person name="Schupp I."/>
        </authorList>
    </citation>
    <scope>NUCLEOTIDE SEQUENCE [LARGE SCALE MRNA] (ISOFORM 1)</scope>
    <scope>NUCLEOTIDE SEQUENCE [LARGE SCALE MRNA] OF 191-663</scope>
    <source>
        <tissue>Amygdala</tissue>
        <tissue>Brain</tissue>
    </source>
</reference>
<reference key="5">
    <citation type="submission" date="2005-07" db="EMBL/GenBank/DDBJ databases">
        <authorList>
            <person name="Mural R.J."/>
            <person name="Istrail S."/>
            <person name="Sutton G.G."/>
            <person name="Florea L."/>
            <person name="Halpern A.L."/>
            <person name="Mobarry C.M."/>
            <person name="Lippert R."/>
            <person name="Walenz B."/>
            <person name="Shatkay H."/>
            <person name="Dew I."/>
            <person name="Miller J.R."/>
            <person name="Flanigan M.J."/>
            <person name="Edwards N.J."/>
            <person name="Bolanos R."/>
            <person name="Fasulo D."/>
            <person name="Halldorsson B.V."/>
            <person name="Hannenhalli S."/>
            <person name="Turner R."/>
            <person name="Yooseph S."/>
            <person name="Lu F."/>
            <person name="Nusskern D.R."/>
            <person name="Shue B.C."/>
            <person name="Zheng X.H."/>
            <person name="Zhong F."/>
            <person name="Delcher A.L."/>
            <person name="Huson D.H."/>
            <person name="Kravitz S.A."/>
            <person name="Mouchard L."/>
            <person name="Reinert K."/>
            <person name="Remington K.A."/>
            <person name="Clark A.G."/>
            <person name="Waterman M.S."/>
            <person name="Eichler E.E."/>
            <person name="Adams M.D."/>
            <person name="Hunkapiller M.W."/>
            <person name="Myers E.W."/>
            <person name="Venter J.C."/>
        </authorList>
    </citation>
    <scope>NUCLEOTIDE SEQUENCE [LARGE SCALE GENOMIC DNA]</scope>
</reference>
<reference key="6">
    <citation type="journal article" date="2004" name="Genome Res.">
        <title>The status, quality, and expansion of the NIH full-length cDNA project: the Mammalian Gene Collection (MGC).</title>
        <authorList>
            <consortium name="The MGC Project Team"/>
        </authorList>
    </citation>
    <scope>NUCLEOTIDE SEQUENCE [LARGE SCALE MRNA] (ISOFORM 5)</scope>
    <source>
        <tissue>Colon</tissue>
    </source>
</reference>
<reference key="7">
    <citation type="journal article" date="2000" name="DNA Res.">
        <title>Prediction of the coding sequences of unidentified human genes. XVII. The complete sequences of 100 new cDNA clones from brain which code for large proteins in vitro.</title>
        <authorList>
            <person name="Nagase T."/>
            <person name="Kikuno R."/>
            <person name="Ishikawa K."/>
            <person name="Hirosawa M."/>
            <person name="Ohara O."/>
        </authorList>
    </citation>
    <scope>NUCLEOTIDE SEQUENCE [LARGE SCALE MRNA] OF 63-663</scope>
    <source>
        <tissue>Brain</tissue>
    </source>
</reference>
<reference key="8">
    <citation type="journal article" date="2013" name="J. Proteome Res.">
        <title>Toward a comprehensive characterization of a human cancer cell phosphoproteome.</title>
        <authorList>
            <person name="Zhou H."/>
            <person name="Di Palma S."/>
            <person name="Preisinger C."/>
            <person name="Peng M."/>
            <person name="Polat A.N."/>
            <person name="Heck A.J."/>
            <person name="Mohammed S."/>
        </authorList>
    </citation>
    <scope>PHOSPHORYLATION [LARGE SCALE ANALYSIS] AT SER-50</scope>
    <scope>IDENTIFICATION BY MASS SPECTROMETRY [LARGE SCALE ANALYSIS]</scope>
    <source>
        <tissue>Cervix carcinoma</tissue>
    </source>
</reference>
<reference key="9">
    <citation type="journal article" date="2014" name="J. Proteomics">
        <title>An enzyme assisted RP-RPLC approach for in-depth analysis of human liver phosphoproteome.</title>
        <authorList>
            <person name="Bian Y."/>
            <person name="Song C."/>
            <person name="Cheng K."/>
            <person name="Dong M."/>
            <person name="Wang F."/>
            <person name="Huang J."/>
            <person name="Sun D."/>
            <person name="Wang L."/>
            <person name="Ye M."/>
            <person name="Zou H."/>
        </authorList>
    </citation>
    <scope>PHOSPHORYLATION [LARGE SCALE ANALYSIS] AT SER-396</scope>
    <scope>IDENTIFICATION BY MASS SPECTROMETRY [LARGE SCALE ANALYSIS]</scope>
    <source>
        <tissue>Liver</tissue>
    </source>
</reference>
<accession>Q9NX95</accession>
<accession>A8K354</accession>
<accession>B3KQX3</accession>
<accession>B3KU61</accession>
<accession>Q5R1T1</accession>
<accession>Q5R1T2</accession>
<accession>Q5R1T3</accession>
<accession>Q5Y2M6</accession>
<accession>Q8ND49</accession>
<accession>Q8TCR6</accession>
<accession>Q96D80</accession>
<accession>Q9P256</accession>